<gene>
    <name evidence="1" type="primary">purA</name>
    <name type="ordered locus">Rpic_1070</name>
</gene>
<dbReference type="EC" id="6.3.4.4" evidence="1"/>
<dbReference type="EMBL" id="CP001068">
    <property type="protein sequence ID" value="ACD26218.1"/>
    <property type="molecule type" value="Genomic_DNA"/>
</dbReference>
<dbReference type="SMR" id="B2U9W0"/>
<dbReference type="STRING" id="402626.Rpic_1070"/>
<dbReference type="KEGG" id="rpi:Rpic_1070"/>
<dbReference type="eggNOG" id="COG0104">
    <property type="taxonomic scope" value="Bacteria"/>
</dbReference>
<dbReference type="HOGENOM" id="CLU_029848_0_0_4"/>
<dbReference type="UniPathway" id="UPA00075">
    <property type="reaction ID" value="UER00335"/>
</dbReference>
<dbReference type="GO" id="GO:0005737">
    <property type="term" value="C:cytoplasm"/>
    <property type="evidence" value="ECO:0007669"/>
    <property type="project" value="UniProtKB-SubCell"/>
</dbReference>
<dbReference type="GO" id="GO:0004019">
    <property type="term" value="F:adenylosuccinate synthase activity"/>
    <property type="evidence" value="ECO:0007669"/>
    <property type="project" value="UniProtKB-UniRule"/>
</dbReference>
<dbReference type="GO" id="GO:0005525">
    <property type="term" value="F:GTP binding"/>
    <property type="evidence" value="ECO:0007669"/>
    <property type="project" value="UniProtKB-UniRule"/>
</dbReference>
<dbReference type="GO" id="GO:0000287">
    <property type="term" value="F:magnesium ion binding"/>
    <property type="evidence" value="ECO:0007669"/>
    <property type="project" value="UniProtKB-UniRule"/>
</dbReference>
<dbReference type="GO" id="GO:0044208">
    <property type="term" value="P:'de novo' AMP biosynthetic process"/>
    <property type="evidence" value="ECO:0007669"/>
    <property type="project" value="UniProtKB-UniRule"/>
</dbReference>
<dbReference type="GO" id="GO:0046040">
    <property type="term" value="P:IMP metabolic process"/>
    <property type="evidence" value="ECO:0007669"/>
    <property type="project" value="TreeGrafter"/>
</dbReference>
<dbReference type="CDD" id="cd03108">
    <property type="entry name" value="AdSS"/>
    <property type="match status" value="1"/>
</dbReference>
<dbReference type="FunFam" id="1.10.300.10:FF:000001">
    <property type="entry name" value="Adenylosuccinate synthetase"/>
    <property type="match status" value="1"/>
</dbReference>
<dbReference type="FunFam" id="3.90.170.10:FF:000001">
    <property type="entry name" value="Adenylosuccinate synthetase"/>
    <property type="match status" value="1"/>
</dbReference>
<dbReference type="Gene3D" id="3.40.440.10">
    <property type="entry name" value="Adenylosuccinate Synthetase, subunit A, domain 1"/>
    <property type="match status" value="1"/>
</dbReference>
<dbReference type="Gene3D" id="1.10.300.10">
    <property type="entry name" value="Adenylosuccinate Synthetase, subunit A, domain 2"/>
    <property type="match status" value="1"/>
</dbReference>
<dbReference type="Gene3D" id="3.90.170.10">
    <property type="entry name" value="Adenylosuccinate Synthetase, subunit A, domain 3"/>
    <property type="match status" value="1"/>
</dbReference>
<dbReference type="HAMAP" id="MF_00011">
    <property type="entry name" value="Adenylosucc_synth"/>
    <property type="match status" value="1"/>
</dbReference>
<dbReference type="InterPro" id="IPR018220">
    <property type="entry name" value="Adenylosuccin_syn_GTP-bd"/>
</dbReference>
<dbReference type="InterPro" id="IPR033128">
    <property type="entry name" value="Adenylosuccin_syn_Lys_AS"/>
</dbReference>
<dbReference type="InterPro" id="IPR042109">
    <property type="entry name" value="Adenylosuccinate_synth_dom1"/>
</dbReference>
<dbReference type="InterPro" id="IPR042110">
    <property type="entry name" value="Adenylosuccinate_synth_dom2"/>
</dbReference>
<dbReference type="InterPro" id="IPR042111">
    <property type="entry name" value="Adenylosuccinate_synth_dom3"/>
</dbReference>
<dbReference type="InterPro" id="IPR001114">
    <property type="entry name" value="Adenylosuccinate_synthetase"/>
</dbReference>
<dbReference type="InterPro" id="IPR027417">
    <property type="entry name" value="P-loop_NTPase"/>
</dbReference>
<dbReference type="NCBIfam" id="NF002223">
    <property type="entry name" value="PRK01117.1"/>
    <property type="match status" value="1"/>
</dbReference>
<dbReference type="NCBIfam" id="TIGR00184">
    <property type="entry name" value="purA"/>
    <property type="match status" value="1"/>
</dbReference>
<dbReference type="PANTHER" id="PTHR11846">
    <property type="entry name" value="ADENYLOSUCCINATE SYNTHETASE"/>
    <property type="match status" value="1"/>
</dbReference>
<dbReference type="PANTHER" id="PTHR11846:SF0">
    <property type="entry name" value="ADENYLOSUCCINATE SYNTHETASE"/>
    <property type="match status" value="1"/>
</dbReference>
<dbReference type="Pfam" id="PF00709">
    <property type="entry name" value="Adenylsucc_synt"/>
    <property type="match status" value="1"/>
</dbReference>
<dbReference type="SMART" id="SM00788">
    <property type="entry name" value="Adenylsucc_synt"/>
    <property type="match status" value="1"/>
</dbReference>
<dbReference type="SUPFAM" id="SSF52540">
    <property type="entry name" value="P-loop containing nucleoside triphosphate hydrolases"/>
    <property type="match status" value="1"/>
</dbReference>
<dbReference type="PROSITE" id="PS01266">
    <property type="entry name" value="ADENYLOSUCCIN_SYN_1"/>
    <property type="match status" value="1"/>
</dbReference>
<dbReference type="PROSITE" id="PS00513">
    <property type="entry name" value="ADENYLOSUCCIN_SYN_2"/>
    <property type="match status" value="1"/>
</dbReference>
<name>PURA_RALPJ</name>
<keyword id="KW-0963">Cytoplasm</keyword>
<keyword id="KW-0342">GTP-binding</keyword>
<keyword id="KW-0436">Ligase</keyword>
<keyword id="KW-0460">Magnesium</keyword>
<keyword id="KW-0479">Metal-binding</keyword>
<keyword id="KW-0547">Nucleotide-binding</keyword>
<keyword id="KW-0658">Purine biosynthesis</keyword>
<sequence length="446" mass="48232">MSAPAVSQGRNVVVIGTQWGDEGKGKIVDWLTDHAQGVVRFQGGHNAGHTLIIGGKKTILRLIPSGIMRDGVACYIGNGVVLSPEALFKEIDELESAGVQVQNRLRISEATNLILPYHVAIDKAREAKRGAAKIGTTGRGIGPAYEDKVARRGLRVQDLFDPAYFAERLRENLDFHNFVLTQYLNHPALDFQQTLDEMLSYAGRLAPMVTDVSAELFAANAAGKNLMFEGAQGTLLDIDHGTYPFVTSSNCVAGNAAAGAGVGPGQLHYILGITKAYCTRVGSGPFPSELYDADNPARQDPIGVRLANVGKEFGSVTGRPRRTGWLDAAALRRAIQINGVSGLCMTKLDVLDGLETLKLCVGYMLDGKQIDILPRGSDAVARCQPIYEEFPGWNTSTFGLKEWDALPQTAQAYLKRVEEVAGIPIAMISTGPDRDETILLRHPYKD</sequence>
<accession>B2U9W0</accession>
<comment type="function">
    <text evidence="1">Plays an important role in the de novo pathway of purine nucleotide biosynthesis. Catalyzes the first committed step in the biosynthesis of AMP from IMP.</text>
</comment>
<comment type="catalytic activity">
    <reaction evidence="1">
        <text>IMP + L-aspartate + GTP = N(6)-(1,2-dicarboxyethyl)-AMP + GDP + phosphate + 2 H(+)</text>
        <dbReference type="Rhea" id="RHEA:15753"/>
        <dbReference type="ChEBI" id="CHEBI:15378"/>
        <dbReference type="ChEBI" id="CHEBI:29991"/>
        <dbReference type="ChEBI" id="CHEBI:37565"/>
        <dbReference type="ChEBI" id="CHEBI:43474"/>
        <dbReference type="ChEBI" id="CHEBI:57567"/>
        <dbReference type="ChEBI" id="CHEBI:58053"/>
        <dbReference type="ChEBI" id="CHEBI:58189"/>
        <dbReference type="EC" id="6.3.4.4"/>
    </reaction>
</comment>
<comment type="cofactor">
    <cofactor evidence="1">
        <name>Mg(2+)</name>
        <dbReference type="ChEBI" id="CHEBI:18420"/>
    </cofactor>
    <text evidence="1">Binds 1 Mg(2+) ion per subunit.</text>
</comment>
<comment type="pathway">
    <text evidence="1">Purine metabolism; AMP biosynthesis via de novo pathway; AMP from IMP: step 1/2.</text>
</comment>
<comment type="subunit">
    <text evidence="1">Homodimer.</text>
</comment>
<comment type="subcellular location">
    <subcellularLocation>
        <location evidence="1">Cytoplasm</location>
    </subcellularLocation>
</comment>
<comment type="similarity">
    <text evidence="1">Belongs to the adenylosuccinate synthetase family.</text>
</comment>
<feature type="chain" id="PRO_1000089327" description="Adenylosuccinate synthetase">
    <location>
        <begin position="1"/>
        <end position="446"/>
    </location>
</feature>
<feature type="active site" description="Proton acceptor" evidence="1">
    <location>
        <position position="21"/>
    </location>
</feature>
<feature type="active site" description="Proton donor" evidence="1">
    <location>
        <position position="49"/>
    </location>
</feature>
<feature type="binding site" evidence="1">
    <location>
        <begin position="20"/>
        <end position="26"/>
    </location>
    <ligand>
        <name>GTP</name>
        <dbReference type="ChEBI" id="CHEBI:37565"/>
    </ligand>
</feature>
<feature type="binding site" description="in other chain" evidence="1">
    <location>
        <begin position="21"/>
        <end position="24"/>
    </location>
    <ligand>
        <name>IMP</name>
        <dbReference type="ChEBI" id="CHEBI:58053"/>
        <note>ligand shared between dimeric partners</note>
    </ligand>
</feature>
<feature type="binding site" evidence="1">
    <location>
        <position position="21"/>
    </location>
    <ligand>
        <name>Mg(2+)</name>
        <dbReference type="ChEBI" id="CHEBI:18420"/>
    </ligand>
</feature>
<feature type="binding site" description="in other chain" evidence="1">
    <location>
        <begin position="46"/>
        <end position="49"/>
    </location>
    <ligand>
        <name>IMP</name>
        <dbReference type="ChEBI" id="CHEBI:58053"/>
        <note>ligand shared between dimeric partners</note>
    </ligand>
</feature>
<feature type="binding site" evidence="1">
    <location>
        <begin position="48"/>
        <end position="50"/>
    </location>
    <ligand>
        <name>GTP</name>
        <dbReference type="ChEBI" id="CHEBI:37565"/>
    </ligand>
</feature>
<feature type="binding site" evidence="1">
    <location>
        <position position="48"/>
    </location>
    <ligand>
        <name>Mg(2+)</name>
        <dbReference type="ChEBI" id="CHEBI:18420"/>
    </ligand>
</feature>
<feature type="binding site" description="in other chain" evidence="1">
    <location>
        <position position="137"/>
    </location>
    <ligand>
        <name>IMP</name>
        <dbReference type="ChEBI" id="CHEBI:58053"/>
        <note>ligand shared between dimeric partners</note>
    </ligand>
</feature>
<feature type="binding site" evidence="1">
    <location>
        <position position="151"/>
    </location>
    <ligand>
        <name>IMP</name>
        <dbReference type="ChEBI" id="CHEBI:58053"/>
        <note>ligand shared between dimeric partners</note>
    </ligand>
</feature>
<feature type="binding site" description="in other chain" evidence="1">
    <location>
        <position position="232"/>
    </location>
    <ligand>
        <name>IMP</name>
        <dbReference type="ChEBI" id="CHEBI:58053"/>
        <note>ligand shared between dimeric partners</note>
    </ligand>
</feature>
<feature type="binding site" description="in other chain" evidence="1">
    <location>
        <position position="247"/>
    </location>
    <ligand>
        <name>IMP</name>
        <dbReference type="ChEBI" id="CHEBI:58053"/>
        <note>ligand shared between dimeric partners</note>
    </ligand>
</feature>
<feature type="binding site" evidence="1">
    <location>
        <begin position="315"/>
        <end position="321"/>
    </location>
    <ligand>
        <name>substrate</name>
    </ligand>
</feature>
<feature type="binding site" description="in other chain" evidence="1">
    <location>
        <position position="319"/>
    </location>
    <ligand>
        <name>IMP</name>
        <dbReference type="ChEBI" id="CHEBI:58053"/>
        <note>ligand shared between dimeric partners</note>
    </ligand>
</feature>
<feature type="binding site" evidence="1">
    <location>
        <position position="321"/>
    </location>
    <ligand>
        <name>GTP</name>
        <dbReference type="ChEBI" id="CHEBI:37565"/>
    </ligand>
</feature>
<feature type="binding site" evidence="1">
    <location>
        <begin position="347"/>
        <end position="349"/>
    </location>
    <ligand>
        <name>GTP</name>
        <dbReference type="ChEBI" id="CHEBI:37565"/>
    </ligand>
</feature>
<feature type="binding site" evidence="1">
    <location>
        <begin position="429"/>
        <end position="431"/>
    </location>
    <ligand>
        <name>GTP</name>
        <dbReference type="ChEBI" id="CHEBI:37565"/>
    </ligand>
</feature>
<evidence type="ECO:0000255" key="1">
    <source>
        <dbReference type="HAMAP-Rule" id="MF_00011"/>
    </source>
</evidence>
<proteinExistence type="inferred from homology"/>
<reference key="1">
    <citation type="submission" date="2008-05" db="EMBL/GenBank/DDBJ databases">
        <title>Complete sequence of chromosome 1 of Ralstonia pickettii 12J.</title>
        <authorList>
            <person name="Lucas S."/>
            <person name="Copeland A."/>
            <person name="Lapidus A."/>
            <person name="Glavina del Rio T."/>
            <person name="Dalin E."/>
            <person name="Tice H."/>
            <person name="Bruce D."/>
            <person name="Goodwin L."/>
            <person name="Pitluck S."/>
            <person name="Meincke L."/>
            <person name="Brettin T."/>
            <person name="Detter J.C."/>
            <person name="Han C."/>
            <person name="Kuske C.R."/>
            <person name="Schmutz J."/>
            <person name="Larimer F."/>
            <person name="Land M."/>
            <person name="Hauser L."/>
            <person name="Kyrpides N."/>
            <person name="Mikhailova N."/>
            <person name="Marsh T."/>
            <person name="Richardson P."/>
        </authorList>
    </citation>
    <scope>NUCLEOTIDE SEQUENCE [LARGE SCALE GENOMIC DNA]</scope>
    <source>
        <strain>12J</strain>
    </source>
</reference>
<protein>
    <recommendedName>
        <fullName evidence="1">Adenylosuccinate synthetase</fullName>
        <shortName evidence="1">AMPSase</shortName>
        <shortName evidence="1">AdSS</shortName>
        <ecNumber evidence="1">6.3.4.4</ecNumber>
    </recommendedName>
    <alternativeName>
        <fullName evidence="1">IMP--aspartate ligase</fullName>
    </alternativeName>
</protein>
<organism>
    <name type="scientific">Ralstonia pickettii (strain 12J)</name>
    <dbReference type="NCBI Taxonomy" id="402626"/>
    <lineage>
        <taxon>Bacteria</taxon>
        <taxon>Pseudomonadati</taxon>
        <taxon>Pseudomonadota</taxon>
        <taxon>Betaproteobacteria</taxon>
        <taxon>Burkholderiales</taxon>
        <taxon>Burkholderiaceae</taxon>
        <taxon>Ralstonia</taxon>
    </lineage>
</organism>